<comment type="alternative products">
    <event type="alternative splicing"/>
    <isoform>
        <id>B7FF09-1</id>
        <name evidence="4">B</name>
        <sequence type="displayed"/>
    </isoform>
    <isoform>
        <id>B7FF09-2</id>
        <name evidence="3">A</name>
        <sequence type="described" ref="VSP_053099 VSP_053100"/>
    </isoform>
</comment>
<keyword id="KW-0025">Alternative splicing</keyword>
<keyword id="KW-1185">Reference proteome</keyword>
<keyword id="KW-0677">Repeat</keyword>
<keyword id="KW-0853">WD repeat</keyword>
<evidence type="ECO:0000255" key="1"/>
<evidence type="ECO:0000256" key="2">
    <source>
        <dbReference type="SAM" id="MobiDB-lite"/>
    </source>
</evidence>
<evidence type="ECO:0000269" key="3">
    <source>
    </source>
</evidence>
<evidence type="ECO:0000269" key="4">
    <source>
    </source>
</evidence>
<evidence type="ECO:0000303" key="5">
    <source>
    </source>
</evidence>
<evidence type="ECO:0000303" key="6">
    <source>
    </source>
</evidence>
<evidence type="ECO:0000305" key="7"/>
<evidence type="ECO:0000312" key="8">
    <source>
        <dbReference type="EMBL" id="DAA06443.1"/>
    </source>
</evidence>
<evidence type="ECO:0000312" key="9">
    <source>
        <dbReference type="EMBL" id="EDW80241.1"/>
    </source>
</evidence>
<gene>
    <name evidence="8" type="primary">WDY</name>
    <name type="ORF">GK21064</name>
</gene>
<protein>
    <recommendedName>
        <fullName evidence="6 8">WD repeat-containing protein on Y chromosome</fullName>
        <shortName evidence="6">WD40 Y</shortName>
    </recommendedName>
</protein>
<organism>
    <name type="scientific">Drosophila willistoni</name>
    <name type="common">Fruit fly</name>
    <dbReference type="NCBI Taxonomy" id="7260"/>
    <lineage>
        <taxon>Eukaryota</taxon>
        <taxon>Metazoa</taxon>
        <taxon>Ecdysozoa</taxon>
        <taxon>Arthropoda</taxon>
        <taxon>Hexapoda</taxon>
        <taxon>Insecta</taxon>
        <taxon>Pterygota</taxon>
        <taxon>Neoptera</taxon>
        <taxon>Endopterygota</taxon>
        <taxon>Diptera</taxon>
        <taxon>Brachycera</taxon>
        <taxon>Muscomorpha</taxon>
        <taxon>Ephydroidea</taxon>
        <taxon>Drosophilidae</taxon>
        <taxon>Drosophila</taxon>
        <taxon>Sophophora</taxon>
    </lineage>
</organism>
<reference evidence="9" key="1">
    <citation type="journal article" date="2007" name="Nature">
        <title>Evolution of genes and genomes on the Drosophila phylogeny.</title>
        <authorList>
            <consortium name="Drosophila 12 genomes consortium"/>
        </authorList>
    </citation>
    <scope>NUCLEOTIDE SEQUENCE [LARGE SCALE GENOMIC DNA]</scope>
    <source>
        <strain evidence="3">Tucson 14030-0811.24</strain>
    </source>
</reference>
<reference evidence="7 8" key="2">
    <citation type="journal article" date="2008" name="Nature">
        <title>Low conservation of gene content in the Drosophila Y chromosome.</title>
        <authorList>
            <person name="Koerich L.B."/>
            <person name="Wang X."/>
            <person name="Clark A.G."/>
            <person name="Carvalho A.B."/>
        </authorList>
    </citation>
    <scope>IDENTIFICATION</scope>
</reference>
<accession>B7FF09</accession>
<accession>B4N7A0</accession>
<sequence length="1089" mass="123962">MSAILNASVDSNTNIEYQTISSTQSQISEEQSERLHDRISKEQLEKLHEAFKAYPDQQLGVEELREVLEEVDIVFNDAVYTRLFLKINQNHDFRVDWNEFVSYLIFGFQEEDPSSQKESLILPISVPPVVRKSEHRSAVCCLALLKVKSDQAPLEEVAETSNFSFGGEDSPEASGMWVTASHEGMMKFWSSHMEPIRTASSESSNLPHAVYVMSYAFYNNGKVHSKLILGDYGGNVRILSYSPHLRGPFQAKPGAALIEVVWSDVLKGKIPLLIPKEYINLHSELISCVYYSLHMNALFASAEYRNTKKYRGRCPGIIMVSYGDKSNFRIPLGVTTFFVAESHNIVVTGGPDTFVRIWDVYIPTEPSAILTGHNGGIVMVFVQPEENKVYSVDYQKIIKVWNLQEHTLLQTYGDLVRLIHHTETDLTYYYHSHLRELIVAGRKLISIKCCPRVRVDLTDGNTHAAPVSVVLYNRLFRNIVTCGLDSYIIVWDPWTGRRKIIMKSCHTKMIYGETIDIEITAACFDPLEQFLLTGARDGSLKIWNYNNAVVIRNMSIQPDQEVTAVIWVVERILAMGWDRQVTEFNDVEGREYGDPKKWPKFHTDDITCGDVKLGEGVVTATYSGEIIFWKLETGQPYRRYSVMEPKRFIELKLSDEEKQMKRSKRWASRAPHSGSHMMSHTGSHMGSNVDQMSGSRSRGLAILQGQEEIREYGVNVPISVQAVLFLQNRPQTLHHGSVFISLDTGIIQVYSHHQRGGYMNEFLAVHKTGDCVLTMATDRKNRFLFTGTAFGYIKVWYIVNYCIPEAEKIHVCMPRLRLDFIFLRKETFLTRAKRVVRNQAEPLLVSSYKGHLKAINSISFINLPKIIITGSHDYSCRLWTQGGRYLGTLGSVLPWTKLSPFERAGDDTHVYRLPPDIKKVASSTTLKVISGLQVDRPMKRPDKAKTEEKEEDTAQALETNDLKKLFDRPLKDPILGKHFQLPGRSALDQRIDLDTTQSYIPVYTNLKVHPSEELERLPTPAVISRVQAENYLHQYLPVEGKVDLNDSALNIKLPSRRRSDRTNDPRNMRTAKTRGDMGLGHRSSHTSQN</sequence>
<feature type="chain" id="PRO_0000378999" description="WD repeat-containing protein on Y chromosome">
    <location>
        <begin position="1"/>
        <end position="1089"/>
    </location>
</feature>
<feature type="repeat" description="WD 1" evidence="1">
    <location>
        <begin position="155"/>
        <end position="199"/>
    </location>
</feature>
<feature type="repeat" description="WD 2" evidence="1">
    <location>
        <begin position="207"/>
        <end position="249"/>
    </location>
</feature>
<feature type="repeat" description="WD 3" evidence="1">
    <location>
        <begin position="329"/>
        <end position="368"/>
    </location>
</feature>
<feature type="repeat" description="WD 4" evidence="1">
    <location>
        <begin position="372"/>
        <end position="411"/>
    </location>
</feature>
<feature type="repeat" description="WD 5" evidence="1">
    <location>
        <begin position="462"/>
        <end position="501"/>
    </location>
</feature>
<feature type="repeat" description="WD 6" evidence="1">
    <location>
        <begin position="514"/>
        <end position="553"/>
    </location>
</feature>
<feature type="repeat" description="WD 7" evidence="1">
    <location>
        <begin position="601"/>
        <end position="641"/>
    </location>
</feature>
<feature type="repeat" description="WD 8" evidence="1">
    <location>
        <begin position="767"/>
        <end position="806"/>
    </location>
</feature>
<feature type="repeat" description="WD 9" evidence="1">
    <location>
        <begin position="850"/>
        <end position="889"/>
    </location>
</feature>
<feature type="region of interest" description="Disordered" evidence="2">
    <location>
        <begin position="661"/>
        <end position="684"/>
    </location>
</feature>
<feature type="region of interest" description="Disordered" evidence="2">
    <location>
        <begin position="1049"/>
        <end position="1089"/>
    </location>
</feature>
<feature type="compositionally biased region" description="Low complexity" evidence="2">
    <location>
        <begin position="672"/>
        <end position="684"/>
    </location>
</feature>
<feature type="splice variant" id="VSP_053099" description="In isoform A." evidence="5">
    <original>SN</original>
    <variation>IHLKMPTWILAVQALSDVSVVCTSSTERELRFHETIASTFSLRMVIRS</variation>
    <location>
        <begin position="204"/>
        <end position="205"/>
    </location>
</feature>
<feature type="splice variant" id="VSP_053100" description="In isoform A." evidence="5">
    <location>
        <begin position="803"/>
        <end position="869"/>
    </location>
</feature>
<dbReference type="EMBL" id="CH964182">
    <property type="protein sequence ID" value="EDW80241.1"/>
    <property type="molecule type" value="Genomic_DNA"/>
</dbReference>
<dbReference type="EMBL" id="BK006446">
    <property type="protein sequence ID" value="DAA06443.1"/>
    <property type="molecule type" value="Genomic_DNA"/>
</dbReference>
<dbReference type="RefSeq" id="XP_002069255.2">
    <property type="nucleotide sequence ID" value="XM_002069219.2"/>
</dbReference>
<dbReference type="STRING" id="7260.B7FF09"/>
<dbReference type="OMA" id="MQPGKIH"/>
<dbReference type="OrthoDB" id="5980302at2759"/>
<dbReference type="ChiTaRS" id="WDY">
    <property type="organism name" value="fly"/>
</dbReference>
<dbReference type="Proteomes" id="UP000007798">
    <property type="component" value="Unassembled WGS sequence"/>
</dbReference>
<dbReference type="Gene3D" id="1.10.238.10">
    <property type="entry name" value="EF-hand"/>
    <property type="match status" value="1"/>
</dbReference>
<dbReference type="Gene3D" id="2.130.10.10">
    <property type="entry name" value="YVTN repeat-like/Quinoprotein amine dehydrogenase"/>
    <property type="match status" value="2"/>
</dbReference>
<dbReference type="InterPro" id="IPR011992">
    <property type="entry name" value="EF-hand-dom_pair"/>
</dbReference>
<dbReference type="InterPro" id="IPR011044">
    <property type="entry name" value="Quino_amine_DH_bsu"/>
</dbReference>
<dbReference type="InterPro" id="IPR051242">
    <property type="entry name" value="WD-EF-hand_domain"/>
</dbReference>
<dbReference type="InterPro" id="IPR015943">
    <property type="entry name" value="WD40/YVTN_repeat-like_dom_sf"/>
</dbReference>
<dbReference type="InterPro" id="IPR036322">
    <property type="entry name" value="WD40_repeat_dom_sf"/>
</dbReference>
<dbReference type="InterPro" id="IPR001680">
    <property type="entry name" value="WD40_rpt"/>
</dbReference>
<dbReference type="PANTHER" id="PTHR44324:SF6">
    <property type="entry name" value="EF-HAND CALCIUM BINDING DOMAIN 8"/>
    <property type="match status" value="1"/>
</dbReference>
<dbReference type="PANTHER" id="PTHR44324">
    <property type="entry name" value="WD40 REPEAT DOMAIN 95"/>
    <property type="match status" value="1"/>
</dbReference>
<dbReference type="Pfam" id="PF00400">
    <property type="entry name" value="WD40"/>
    <property type="match status" value="2"/>
</dbReference>
<dbReference type="SMART" id="SM00320">
    <property type="entry name" value="WD40"/>
    <property type="match status" value="8"/>
</dbReference>
<dbReference type="SUPFAM" id="SSF47473">
    <property type="entry name" value="EF-hand"/>
    <property type="match status" value="1"/>
</dbReference>
<dbReference type="SUPFAM" id="SSF50978">
    <property type="entry name" value="WD40 repeat-like"/>
    <property type="match status" value="1"/>
</dbReference>
<dbReference type="SUPFAM" id="SSF50969">
    <property type="entry name" value="YVTN repeat-like/Quinoprotein amine dehydrogenase"/>
    <property type="match status" value="1"/>
</dbReference>
<dbReference type="PROSITE" id="PS00678">
    <property type="entry name" value="WD_REPEATS_1"/>
    <property type="match status" value="1"/>
</dbReference>
<dbReference type="PROSITE" id="PS50082">
    <property type="entry name" value="WD_REPEATS_2"/>
    <property type="match status" value="4"/>
</dbReference>
<dbReference type="PROSITE" id="PS50294">
    <property type="entry name" value="WD_REPEATS_REGION"/>
    <property type="match status" value="2"/>
</dbReference>
<proteinExistence type="predicted"/>
<name>WDY_DROWI</name>